<organism>
    <name type="scientific">Pelagibacter ubique (strain HTCC1062)</name>
    <dbReference type="NCBI Taxonomy" id="335992"/>
    <lineage>
        <taxon>Bacteria</taxon>
        <taxon>Pseudomonadati</taxon>
        <taxon>Pseudomonadota</taxon>
        <taxon>Alphaproteobacteria</taxon>
        <taxon>Candidatus Pelagibacterales</taxon>
        <taxon>Candidatus Pelagibacteraceae</taxon>
        <taxon>Candidatus Pelagibacter</taxon>
    </lineage>
</organism>
<accession>Q4FM91</accession>
<name>NUOA_PELUB</name>
<sequence length="122" mass="14017">MLSEFLKDYLPIIIFLIIALGLSCAFVVVNLILSPKHPDPEKLSAYECGFEPFEDSRMEFDVRFYLVAILFIIFDLEIAFLFPWAISLGNIGGLGFTSMMIFLFILTVGFIYEWKKGALDWE</sequence>
<protein>
    <recommendedName>
        <fullName evidence="1">NADH-quinone oxidoreductase subunit A</fullName>
        <ecNumber evidence="1">7.1.1.-</ecNumber>
    </recommendedName>
    <alternativeName>
        <fullName evidence="1">NADH dehydrogenase I subunit A</fullName>
    </alternativeName>
    <alternativeName>
        <fullName evidence="1">NDH-1 subunit A</fullName>
    </alternativeName>
    <alternativeName>
        <fullName evidence="1">NUO1</fullName>
    </alternativeName>
</protein>
<comment type="function">
    <text evidence="1">NDH-1 shuttles electrons from NADH, via FMN and iron-sulfur (Fe-S) centers, to quinones in the respiratory chain. The immediate electron acceptor for the enzyme in this species is believed to be ubiquinone. Couples the redox reaction to proton translocation (for every two electrons transferred, four hydrogen ions are translocated across the cytoplasmic membrane), and thus conserves the redox energy in a proton gradient.</text>
</comment>
<comment type="catalytic activity">
    <reaction evidence="1">
        <text>a quinone + NADH + 5 H(+)(in) = a quinol + NAD(+) + 4 H(+)(out)</text>
        <dbReference type="Rhea" id="RHEA:57888"/>
        <dbReference type="ChEBI" id="CHEBI:15378"/>
        <dbReference type="ChEBI" id="CHEBI:24646"/>
        <dbReference type="ChEBI" id="CHEBI:57540"/>
        <dbReference type="ChEBI" id="CHEBI:57945"/>
        <dbReference type="ChEBI" id="CHEBI:132124"/>
    </reaction>
</comment>
<comment type="subunit">
    <text evidence="1">NDH-1 is composed of 14 different subunits. Subunits NuoA, H, J, K, L, M, N constitute the membrane sector of the complex.</text>
</comment>
<comment type="subcellular location">
    <subcellularLocation>
        <location evidence="1">Cell inner membrane</location>
        <topology evidence="1">Multi-pass membrane protein</topology>
    </subcellularLocation>
</comment>
<comment type="similarity">
    <text evidence="1">Belongs to the complex I subunit 3 family.</text>
</comment>
<dbReference type="EC" id="7.1.1.-" evidence="1"/>
<dbReference type="EMBL" id="CP000084">
    <property type="protein sequence ID" value="AAZ21698.1"/>
    <property type="molecule type" value="Genomic_DNA"/>
</dbReference>
<dbReference type="RefSeq" id="WP_006997036.1">
    <property type="nucleotide sequence ID" value="NC_007205.1"/>
</dbReference>
<dbReference type="SMR" id="Q4FM91"/>
<dbReference type="STRING" id="335992.SAR11_0883"/>
<dbReference type="GeneID" id="66295378"/>
<dbReference type="KEGG" id="pub:SAR11_0883"/>
<dbReference type="eggNOG" id="COG0838">
    <property type="taxonomic scope" value="Bacteria"/>
</dbReference>
<dbReference type="HOGENOM" id="CLU_119549_3_1_5"/>
<dbReference type="OrthoDB" id="9791970at2"/>
<dbReference type="Proteomes" id="UP000002528">
    <property type="component" value="Chromosome"/>
</dbReference>
<dbReference type="GO" id="GO:0030964">
    <property type="term" value="C:NADH dehydrogenase complex"/>
    <property type="evidence" value="ECO:0007669"/>
    <property type="project" value="TreeGrafter"/>
</dbReference>
<dbReference type="GO" id="GO:0005886">
    <property type="term" value="C:plasma membrane"/>
    <property type="evidence" value="ECO:0007669"/>
    <property type="project" value="UniProtKB-SubCell"/>
</dbReference>
<dbReference type="GO" id="GO:0008137">
    <property type="term" value="F:NADH dehydrogenase (ubiquinone) activity"/>
    <property type="evidence" value="ECO:0007669"/>
    <property type="project" value="InterPro"/>
</dbReference>
<dbReference type="GO" id="GO:0050136">
    <property type="term" value="F:NADH:ubiquinone reductase (non-electrogenic) activity"/>
    <property type="evidence" value="ECO:0007669"/>
    <property type="project" value="UniProtKB-UniRule"/>
</dbReference>
<dbReference type="GO" id="GO:0048038">
    <property type="term" value="F:quinone binding"/>
    <property type="evidence" value="ECO:0007669"/>
    <property type="project" value="UniProtKB-KW"/>
</dbReference>
<dbReference type="FunFam" id="1.20.58.1610:FF:000004">
    <property type="entry name" value="NADH-quinone oxidoreductase subunit A"/>
    <property type="match status" value="1"/>
</dbReference>
<dbReference type="Gene3D" id="1.20.58.1610">
    <property type="entry name" value="NADH:ubiquinone/plastoquinone oxidoreductase, chain 3"/>
    <property type="match status" value="1"/>
</dbReference>
<dbReference type="HAMAP" id="MF_01394">
    <property type="entry name" value="NDH1_NuoA"/>
    <property type="match status" value="1"/>
</dbReference>
<dbReference type="InterPro" id="IPR023043">
    <property type="entry name" value="NAD(P)H_OxRDtase_bac/plastid"/>
</dbReference>
<dbReference type="InterPro" id="IPR000440">
    <property type="entry name" value="NADH_UbQ/plastoQ_OxRdtase_su3"/>
</dbReference>
<dbReference type="InterPro" id="IPR038430">
    <property type="entry name" value="NDAH_ubi_oxred_su3_sf"/>
</dbReference>
<dbReference type="PANTHER" id="PTHR11058">
    <property type="entry name" value="NADH-UBIQUINONE OXIDOREDUCTASE CHAIN 3"/>
    <property type="match status" value="1"/>
</dbReference>
<dbReference type="PANTHER" id="PTHR11058:SF9">
    <property type="entry name" value="NADH-UBIQUINONE OXIDOREDUCTASE CHAIN 3"/>
    <property type="match status" value="1"/>
</dbReference>
<dbReference type="Pfam" id="PF00507">
    <property type="entry name" value="Oxidored_q4"/>
    <property type="match status" value="1"/>
</dbReference>
<proteinExistence type="inferred from homology"/>
<feature type="chain" id="PRO_0000362710" description="NADH-quinone oxidoreductase subunit A">
    <location>
        <begin position="1"/>
        <end position="122"/>
    </location>
</feature>
<feature type="transmembrane region" description="Helical" evidence="1">
    <location>
        <begin position="12"/>
        <end position="32"/>
    </location>
</feature>
<feature type="transmembrane region" description="Helical" evidence="1">
    <location>
        <begin position="66"/>
        <end position="86"/>
    </location>
</feature>
<feature type="transmembrane region" description="Helical" evidence="1">
    <location>
        <begin position="91"/>
        <end position="111"/>
    </location>
</feature>
<reference key="1">
    <citation type="journal article" date="2005" name="Science">
        <title>Genome streamlining in a cosmopolitan oceanic bacterium.</title>
        <authorList>
            <person name="Giovannoni S.J."/>
            <person name="Tripp H.J."/>
            <person name="Givan S."/>
            <person name="Podar M."/>
            <person name="Vergin K.L."/>
            <person name="Baptista D."/>
            <person name="Bibbs L."/>
            <person name="Eads J."/>
            <person name="Richardson T.H."/>
            <person name="Noordewier M."/>
            <person name="Rappe M.S."/>
            <person name="Short J.M."/>
            <person name="Carrington J.C."/>
            <person name="Mathur E.J."/>
        </authorList>
    </citation>
    <scope>NUCLEOTIDE SEQUENCE [LARGE SCALE GENOMIC DNA]</scope>
    <source>
        <strain>HTCC1062</strain>
    </source>
</reference>
<keyword id="KW-0997">Cell inner membrane</keyword>
<keyword id="KW-1003">Cell membrane</keyword>
<keyword id="KW-0472">Membrane</keyword>
<keyword id="KW-0520">NAD</keyword>
<keyword id="KW-0874">Quinone</keyword>
<keyword id="KW-1185">Reference proteome</keyword>
<keyword id="KW-1278">Translocase</keyword>
<keyword id="KW-0812">Transmembrane</keyword>
<keyword id="KW-1133">Transmembrane helix</keyword>
<keyword id="KW-0813">Transport</keyword>
<keyword id="KW-0830">Ubiquinone</keyword>
<gene>
    <name evidence="1" type="primary">nuoA</name>
    <name type="ordered locus">SAR11_0883</name>
</gene>
<evidence type="ECO:0000255" key="1">
    <source>
        <dbReference type="HAMAP-Rule" id="MF_01394"/>
    </source>
</evidence>